<gene>
    <name type="primary">AGT</name>
    <name type="synonym">SERPINA8</name>
</gene>
<name>ANGT_CHICK</name>
<dbReference type="PIR" id="A90917">
    <property type="entry name" value="A90917"/>
</dbReference>
<dbReference type="FunCoup" id="P67885">
    <property type="interactions" value="1049"/>
</dbReference>
<dbReference type="InParanoid" id="P67885"/>
<dbReference type="OrthoDB" id="7817921at2759"/>
<dbReference type="Proteomes" id="UP000000539">
    <property type="component" value="Unassembled WGS sequence"/>
</dbReference>
<dbReference type="GO" id="GO:0005576">
    <property type="term" value="C:extracellular region"/>
    <property type="evidence" value="ECO:0007669"/>
    <property type="project" value="UniProtKB-SubCell"/>
</dbReference>
<dbReference type="GO" id="GO:0042310">
    <property type="term" value="P:vasoconstriction"/>
    <property type="evidence" value="ECO:0007669"/>
    <property type="project" value="UniProtKB-KW"/>
</dbReference>
<sequence>DRVYVHPFSL</sequence>
<feature type="chain" id="PRO_0000045870" description="Angiotensinogen">
    <location>
        <begin position="1"/>
        <end position="10" status="greater than"/>
    </location>
</feature>
<feature type="peptide" id="PRO_0000032476" description="Angiotensin-1" evidence="2">
    <location>
        <begin position="1"/>
        <end position="10"/>
    </location>
</feature>
<feature type="peptide" id="PRO_0000032477" description="Angiotensin-2" evidence="1">
    <location>
        <begin position="1"/>
        <end position="8"/>
    </location>
</feature>
<feature type="peptide" id="PRO_0000032478" description="Angiotensin-3" evidence="1">
    <location>
        <begin position="2"/>
        <end position="8"/>
    </location>
</feature>
<feature type="non-terminal residue">
    <location>
        <position position="10"/>
    </location>
</feature>
<reference key="1">
    <citation type="journal article" date="1973" name="Chem. Pharm. Bull.">
        <title>Comparative studies on angiotensins. 3. Structure of fowl angiotensin and its identification by DNS-method.</title>
        <authorList>
            <person name="Nakayama T."/>
            <person name="Nakajima T."/>
            <person name="Sokabe H."/>
        </authorList>
    </citation>
    <scope>PROTEIN SEQUENCE</scope>
</reference>
<evidence type="ECO:0000250" key="1">
    <source>
        <dbReference type="UniProtKB" id="P01019"/>
    </source>
</evidence>
<evidence type="ECO:0000269" key="2">
    <source>
    </source>
</evidence>
<evidence type="ECO:0000305" key="3"/>
<evidence type="ECO:0000305" key="4">
    <source>
    </source>
</evidence>
<comment type="function">
    <text evidence="1">In response to lowered blood pressure, the enzyme renin cleaves angiotensin-1, from angiotensinogen. ACE (angiotensin converting enzyme) then removes a dipeptide to yield the physiologically active peptide angiotensin-2, the most potent pressor substance known, which helps regulate volume and mineral balance of body fluids.</text>
</comment>
<comment type="subcellular location">
    <subcellularLocation>
        <location evidence="4">Secreted</location>
    </subcellularLocation>
</comment>
<comment type="similarity">
    <text evidence="3">Belongs to the serpin family.</text>
</comment>
<protein>
    <recommendedName>
        <fullName>Angiotensinogen</fullName>
    </recommendedName>
    <alternativeName>
        <fullName>Serpin A8</fullName>
    </alternativeName>
    <component>
        <recommendedName>
            <fullName>Angiotensin-1</fullName>
        </recommendedName>
        <alternativeName>
            <fullName>Angiotensin I</fullName>
            <shortName>Ang I</shortName>
        </alternativeName>
    </component>
    <component>
        <recommendedName>
            <fullName>Angiotensin-2</fullName>
        </recommendedName>
        <alternativeName>
            <fullName>Angiotensin II</fullName>
            <shortName>Ang II</shortName>
        </alternativeName>
    </component>
    <component>
        <recommendedName>
            <fullName>Angiotensin-3</fullName>
        </recommendedName>
        <alternativeName>
            <fullName>Angiotensin III</fullName>
            <shortName>Ang III</shortName>
        </alternativeName>
        <alternativeName>
            <fullName>Des-Asp[1]-angiotensin II</fullName>
        </alternativeName>
    </component>
</protein>
<accession>P67885</accession>
<accession>P01018</accession>
<organism>
    <name type="scientific">Gallus gallus</name>
    <name type="common">Chicken</name>
    <dbReference type="NCBI Taxonomy" id="9031"/>
    <lineage>
        <taxon>Eukaryota</taxon>
        <taxon>Metazoa</taxon>
        <taxon>Chordata</taxon>
        <taxon>Craniata</taxon>
        <taxon>Vertebrata</taxon>
        <taxon>Euteleostomi</taxon>
        <taxon>Archelosauria</taxon>
        <taxon>Archosauria</taxon>
        <taxon>Dinosauria</taxon>
        <taxon>Saurischia</taxon>
        <taxon>Theropoda</taxon>
        <taxon>Coelurosauria</taxon>
        <taxon>Aves</taxon>
        <taxon>Neognathae</taxon>
        <taxon>Galloanserae</taxon>
        <taxon>Galliformes</taxon>
        <taxon>Phasianidae</taxon>
        <taxon>Phasianinae</taxon>
        <taxon>Gallus</taxon>
    </lineage>
</organism>
<keyword id="KW-0903">Direct protein sequencing</keyword>
<keyword id="KW-1185">Reference proteome</keyword>
<keyword id="KW-0964">Secreted</keyword>
<keyword id="KW-0838">Vasoactive</keyword>
<keyword id="KW-0839">Vasoconstrictor</keyword>
<proteinExistence type="evidence at protein level"/>